<keyword id="KW-0030">Aminoacyl-tRNA synthetase</keyword>
<keyword id="KW-0067">ATP-binding</keyword>
<keyword id="KW-0963">Cytoplasm</keyword>
<keyword id="KW-0436">Ligase</keyword>
<keyword id="KW-0547">Nucleotide-binding</keyword>
<keyword id="KW-0648">Protein biosynthesis</keyword>
<dbReference type="EC" id="6.1.1.17" evidence="1"/>
<dbReference type="EMBL" id="BA000018">
    <property type="protein sequence ID" value="BAB41716.1"/>
    <property type="molecule type" value="Genomic_DNA"/>
</dbReference>
<dbReference type="PIR" id="A89820">
    <property type="entry name" value="A89820"/>
</dbReference>
<dbReference type="RefSeq" id="WP_001283792.1">
    <property type="nucleotide sequence ID" value="NC_002745.2"/>
</dbReference>
<dbReference type="SMR" id="P99170"/>
<dbReference type="EnsemblBacteria" id="BAB41716">
    <property type="protein sequence ID" value="BAB41716"/>
    <property type="gene ID" value="BAB41716"/>
</dbReference>
<dbReference type="KEGG" id="sau:SA0486"/>
<dbReference type="HOGENOM" id="CLU_015768_6_1_9"/>
<dbReference type="GO" id="GO:0005829">
    <property type="term" value="C:cytosol"/>
    <property type="evidence" value="ECO:0007669"/>
    <property type="project" value="TreeGrafter"/>
</dbReference>
<dbReference type="GO" id="GO:0005524">
    <property type="term" value="F:ATP binding"/>
    <property type="evidence" value="ECO:0007669"/>
    <property type="project" value="UniProtKB-UniRule"/>
</dbReference>
<dbReference type="GO" id="GO:0004818">
    <property type="term" value="F:glutamate-tRNA ligase activity"/>
    <property type="evidence" value="ECO:0007669"/>
    <property type="project" value="UniProtKB-UniRule"/>
</dbReference>
<dbReference type="GO" id="GO:0000049">
    <property type="term" value="F:tRNA binding"/>
    <property type="evidence" value="ECO:0007669"/>
    <property type="project" value="InterPro"/>
</dbReference>
<dbReference type="GO" id="GO:0008270">
    <property type="term" value="F:zinc ion binding"/>
    <property type="evidence" value="ECO:0007669"/>
    <property type="project" value="InterPro"/>
</dbReference>
<dbReference type="GO" id="GO:0006424">
    <property type="term" value="P:glutamyl-tRNA aminoacylation"/>
    <property type="evidence" value="ECO:0007669"/>
    <property type="project" value="UniProtKB-UniRule"/>
</dbReference>
<dbReference type="CDD" id="cd00808">
    <property type="entry name" value="GluRS_core"/>
    <property type="match status" value="1"/>
</dbReference>
<dbReference type="FunFam" id="1.10.10.350:FF:000002">
    <property type="entry name" value="Glutamate--tRNA ligase"/>
    <property type="match status" value="1"/>
</dbReference>
<dbReference type="FunFam" id="3.40.50.620:FF:000007">
    <property type="entry name" value="Glutamate--tRNA ligase"/>
    <property type="match status" value="1"/>
</dbReference>
<dbReference type="Gene3D" id="1.10.10.350">
    <property type="match status" value="1"/>
</dbReference>
<dbReference type="Gene3D" id="3.40.50.620">
    <property type="entry name" value="HUPs"/>
    <property type="match status" value="1"/>
</dbReference>
<dbReference type="HAMAP" id="MF_00022">
    <property type="entry name" value="Glu_tRNA_synth_type1"/>
    <property type="match status" value="1"/>
</dbReference>
<dbReference type="InterPro" id="IPR045462">
    <property type="entry name" value="aa-tRNA-synth_I_cd-bd"/>
</dbReference>
<dbReference type="InterPro" id="IPR020751">
    <property type="entry name" value="aa-tRNA-synth_I_codon-bd_sub2"/>
</dbReference>
<dbReference type="InterPro" id="IPR001412">
    <property type="entry name" value="aa-tRNA-synth_I_CS"/>
</dbReference>
<dbReference type="InterPro" id="IPR008925">
    <property type="entry name" value="aa_tRNA-synth_I_cd-bd_sf"/>
</dbReference>
<dbReference type="InterPro" id="IPR004527">
    <property type="entry name" value="Glu-tRNA-ligase_bac/mito"/>
</dbReference>
<dbReference type="InterPro" id="IPR000924">
    <property type="entry name" value="Glu/Gln-tRNA-synth"/>
</dbReference>
<dbReference type="InterPro" id="IPR020058">
    <property type="entry name" value="Glu/Gln-tRNA-synth_Ib_cat-dom"/>
</dbReference>
<dbReference type="InterPro" id="IPR049940">
    <property type="entry name" value="GluQ/Sye"/>
</dbReference>
<dbReference type="InterPro" id="IPR033910">
    <property type="entry name" value="GluRS_core"/>
</dbReference>
<dbReference type="InterPro" id="IPR014729">
    <property type="entry name" value="Rossmann-like_a/b/a_fold"/>
</dbReference>
<dbReference type="NCBIfam" id="TIGR00464">
    <property type="entry name" value="gltX_bact"/>
    <property type="match status" value="1"/>
</dbReference>
<dbReference type="PANTHER" id="PTHR43311">
    <property type="entry name" value="GLUTAMATE--TRNA LIGASE"/>
    <property type="match status" value="1"/>
</dbReference>
<dbReference type="PANTHER" id="PTHR43311:SF2">
    <property type="entry name" value="GLUTAMATE--TRNA LIGASE, MITOCHONDRIAL-RELATED"/>
    <property type="match status" value="1"/>
</dbReference>
<dbReference type="Pfam" id="PF19269">
    <property type="entry name" value="Anticodon_2"/>
    <property type="match status" value="1"/>
</dbReference>
<dbReference type="Pfam" id="PF00749">
    <property type="entry name" value="tRNA-synt_1c"/>
    <property type="match status" value="1"/>
</dbReference>
<dbReference type="PRINTS" id="PR00987">
    <property type="entry name" value="TRNASYNTHGLU"/>
</dbReference>
<dbReference type="SUPFAM" id="SSF48163">
    <property type="entry name" value="An anticodon-binding domain of class I aminoacyl-tRNA synthetases"/>
    <property type="match status" value="1"/>
</dbReference>
<dbReference type="SUPFAM" id="SSF52374">
    <property type="entry name" value="Nucleotidylyl transferase"/>
    <property type="match status" value="1"/>
</dbReference>
<dbReference type="PROSITE" id="PS00178">
    <property type="entry name" value="AA_TRNA_LIGASE_I"/>
    <property type="match status" value="1"/>
</dbReference>
<proteinExistence type="evidence at protein level"/>
<protein>
    <recommendedName>
        <fullName evidence="1">Glutamate--tRNA ligase</fullName>
        <ecNumber evidence="1">6.1.1.17</ecNumber>
    </recommendedName>
    <alternativeName>
        <fullName evidence="1">Glutamyl-tRNA synthetase</fullName>
        <shortName evidence="1">GluRS</shortName>
    </alternativeName>
</protein>
<gene>
    <name evidence="1" type="primary">gltX</name>
    <name type="ordered locus">SA0486</name>
</gene>
<organism>
    <name type="scientific">Staphylococcus aureus (strain N315)</name>
    <dbReference type="NCBI Taxonomy" id="158879"/>
    <lineage>
        <taxon>Bacteria</taxon>
        <taxon>Bacillati</taxon>
        <taxon>Bacillota</taxon>
        <taxon>Bacilli</taxon>
        <taxon>Bacillales</taxon>
        <taxon>Staphylococcaceae</taxon>
        <taxon>Staphylococcus</taxon>
    </lineage>
</organism>
<reference key="1">
    <citation type="journal article" date="2001" name="Lancet">
        <title>Whole genome sequencing of meticillin-resistant Staphylococcus aureus.</title>
        <authorList>
            <person name="Kuroda M."/>
            <person name="Ohta T."/>
            <person name="Uchiyama I."/>
            <person name="Baba T."/>
            <person name="Yuzawa H."/>
            <person name="Kobayashi I."/>
            <person name="Cui L."/>
            <person name="Oguchi A."/>
            <person name="Aoki K."/>
            <person name="Nagai Y."/>
            <person name="Lian J.-Q."/>
            <person name="Ito T."/>
            <person name="Kanamori M."/>
            <person name="Matsumaru H."/>
            <person name="Maruyama A."/>
            <person name="Murakami H."/>
            <person name="Hosoyama A."/>
            <person name="Mizutani-Ui Y."/>
            <person name="Takahashi N.K."/>
            <person name="Sawano T."/>
            <person name="Inoue R."/>
            <person name="Kaito C."/>
            <person name="Sekimizu K."/>
            <person name="Hirakawa H."/>
            <person name="Kuhara S."/>
            <person name="Goto S."/>
            <person name="Yabuzaki J."/>
            <person name="Kanehisa M."/>
            <person name="Yamashita A."/>
            <person name="Oshima K."/>
            <person name="Furuya K."/>
            <person name="Yoshino C."/>
            <person name="Shiba T."/>
            <person name="Hattori M."/>
            <person name="Ogasawara N."/>
            <person name="Hayashi H."/>
            <person name="Hiramatsu K."/>
        </authorList>
    </citation>
    <scope>NUCLEOTIDE SEQUENCE [LARGE SCALE GENOMIC DNA]</scope>
    <source>
        <strain>N315</strain>
    </source>
</reference>
<reference key="2">
    <citation type="journal article" date="2005" name="J. Microbiol. Methods">
        <title>Correlation of proteomic and transcriptomic profiles of Staphylococcus aureus during the post-exponential phase of growth.</title>
        <authorList>
            <person name="Scherl A."/>
            <person name="Francois P."/>
            <person name="Bento M."/>
            <person name="Deshusses J.M."/>
            <person name="Charbonnier Y."/>
            <person name="Converset V."/>
            <person name="Huyghe A."/>
            <person name="Walter N."/>
            <person name="Hoogland C."/>
            <person name="Appel R.D."/>
            <person name="Sanchez J.-C."/>
            <person name="Zimmermann-Ivol C.G."/>
            <person name="Corthals G.L."/>
            <person name="Hochstrasser D.F."/>
            <person name="Schrenzel J."/>
        </authorList>
    </citation>
    <scope>IDENTIFICATION BY MASS SPECTROMETRY</scope>
    <source>
        <strain>N315</strain>
    </source>
</reference>
<reference key="3">
    <citation type="submission" date="2007-10" db="UniProtKB">
        <title>Shotgun proteomic analysis of total and membrane protein extracts of S. aureus strain N315.</title>
        <authorList>
            <person name="Vaezzadeh A.R."/>
            <person name="Deshusses J."/>
            <person name="Lescuyer P."/>
            <person name="Hochstrasser D.F."/>
        </authorList>
    </citation>
    <scope>IDENTIFICATION BY MASS SPECTROMETRY [LARGE SCALE ANALYSIS]</scope>
    <source>
        <strain>N315</strain>
    </source>
</reference>
<sequence length="484" mass="56289">MSDRIRVRYAPSPTGYLHIGNARTALFNYLYAKHYNGDFVIRIEDTDKKRNLEDGETSQFDNLKWLGLDWDESVDKDNGYGPYRQSERQHIYQPLIDQLLAEDKAYKCYMTEEELEAEREAQIARGEMPRYGGQHAHLTEEQRQQFEAEGRQPSIRFRVPQNQTYSFDDMVKGNISFDSNGIGDWVIVKKDGIPTYNFAVAIDDHYMQISDVIRGDDHISNTPKQIMIYEAFGWEPPRFGHMSLIVNEERKKLSKRDGQILQFIEQYRDLGYLPEALFNFIALLGWSPEGEEEIFSKEEFIKIFDEKRLSKSPAFFDKQKLAWVNNQYMKQKDTETVFQLALPHLIKANLIPEVPSEEDLSWGRKLIALYQKEMSYAGEIVPLSEMFFKEMPALGEEEQQVINGEQVPELMTHLFSKLEALEPFEAAEIKKTIKEVQKETGIKGKQLFMPIRVAVTGQMHGPELPNTIEVLGKEKVLNRLKQYK</sequence>
<feature type="chain" id="PRO_0000119653" description="Glutamate--tRNA ligase">
    <location>
        <begin position="1"/>
        <end position="484"/>
    </location>
</feature>
<feature type="short sequence motif" description="'HIGH' region" evidence="1">
    <location>
        <begin position="11"/>
        <end position="21"/>
    </location>
</feature>
<feature type="short sequence motif" description="'KMSKS' region" evidence="1">
    <location>
        <begin position="252"/>
        <end position="256"/>
    </location>
</feature>
<feature type="binding site" evidence="1">
    <location>
        <position position="255"/>
    </location>
    <ligand>
        <name>ATP</name>
        <dbReference type="ChEBI" id="CHEBI:30616"/>
    </ligand>
</feature>
<evidence type="ECO:0000255" key="1">
    <source>
        <dbReference type="HAMAP-Rule" id="MF_00022"/>
    </source>
</evidence>
<comment type="function">
    <text evidence="1">Catalyzes the attachment of glutamate to tRNA(Glu) in a two-step reaction: glutamate is first activated by ATP to form Glu-AMP and then transferred to the acceptor end of tRNA(Glu).</text>
</comment>
<comment type="catalytic activity">
    <reaction evidence="1">
        <text>tRNA(Glu) + L-glutamate + ATP = L-glutamyl-tRNA(Glu) + AMP + diphosphate</text>
        <dbReference type="Rhea" id="RHEA:23540"/>
        <dbReference type="Rhea" id="RHEA-COMP:9663"/>
        <dbReference type="Rhea" id="RHEA-COMP:9680"/>
        <dbReference type="ChEBI" id="CHEBI:29985"/>
        <dbReference type="ChEBI" id="CHEBI:30616"/>
        <dbReference type="ChEBI" id="CHEBI:33019"/>
        <dbReference type="ChEBI" id="CHEBI:78442"/>
        <dbReference type="ChEBI" id="CHEBI:78520"/>
        <dbReference type="ChEBI" id="CHEBI:456215"/>
        <dbReference type="EC" id="6.1.1.17"/>
    </reaction>
</comment>
<comment type="subunit">
    <text evidence="1">Monomer.</text>
</comment>
<comment type="subcellular location">
    <subcellularLocation>
        <location evidence="1">Cytoplasm</location>
    </subcellularLocation>
</comment>
<comment type="similarity">
    <text evidence="1">Belongs to the class-I aminoacyl-tRNA synthetase family. Glutamate--tRNA ligase type 1 subfamily.</text>
</comment>
<accession>P99170</accession>
<accession>Q99W75</accession>
<name>SYE_STAAN</name>